<organism>
    <name type="scientific">Escherichia coli O157:H7 (strain EC4115 / EHEC)</name>
    <dbReference type="NCBI Taxonomy" id="444450"/>
    <lineage>
        <taxon>Bacteria</taxon>
        <taxon>Pseudomonadati</taxon>
        <taxon>Pseudomonadota</taxon>
        <taxon>Gammaproteobacteria</taxon>
        <taxon>Enterobacterales</taxon>
        <taxon>Enterobacteriaceae</taxon>
        <taxon>Escherichia</taxon>
    </lineage>
</organism>
<sequence>MLEQMGIAAKQASYKLAQLSSREKNRVLEKIADELEAQSEIILNANAQDVADARANGLSEAMLDRLALTPARLKGIADDVRQVCNLADPVGQVIDGGVLDSGLRLERRRVPLGVIGVIYEARPNVTVDVASLCLKTGNAVILRGGKETCRTNAATVVVIQDALKSCGLPAGAVQAIDNPDRALVSEMLRMDKYIDMLIPRGGAGLHKLCREQSTIPVITGGIGVCHIYVDESAEIAEALKVIVNAKTQRPSTCNTVETLLVNKNIAYSFLPALSKQMAESGVTLHADASALAQLQTGPAKVVAVKAEEYDDEFLSLDLNVKIVSDLDDAIAHIREHGTQHSDAILTRDMRNAQRFVNEVDSSAVYVNASTRFTDGGQFGLGAEVAVSTQKLHARGPMGLEALTTYKWIGIGDYTIRA</sequence>
<comment type="function">
    <text evidence="1">Catalyzes the NADPH-dependent reduction of L-glutamate 5-phosphate into L-glutamate 5-semialdehyde and phosphate. The product spontaneously undergoes cyclization to form 1-pyrroline-5-carboxylate.</text>
</comment>
<comment type="catalytic activity">
    <reaction evidence="1">
        <text>L-glutamate 5-semialdehyde + phosphate + NADP(+) = L-glutamyl 5-phosphate + NADPH + H(+)</text>
        <dbReference type="Rhea" id="RHEA:19541"/>
        <dbReference type="ChEBI" id="CHEBI:15378"/>
        <dbReference type="ChEBI" id="CHEBI:43474"/>
        <dbReference type="ChEBI" id="CHEBI:57783"/>
        <dbReference type="ChEBI" id="CHEBI:58066"/>
        <dbReference type="ChEBI" id="CHEBI:58274"/>
        <dbReference type="ChEBI" id="CHEBI:58349"/>
        <dbReference type="EC" id="1.2.1.41"/>
    </reaction>
</comment>
<comment type="pathway">
    <text evidence="1">Amino-acid biosynthesis; L-proline biosynthesis; L-glutamate 5-semialdehyde from L-glutamate: step 2/2.</text>
</comment>
<comment type="subcellular location">
    <subcellularLocation>
        <location evidence="1">Cytoplasm</location>
    </subcellularLocation>
</comment>
<comment type="similarity">
    <text evidence="1">Belongs to the gamma-glutamyl phosphate reductase family.</text>
</comment>
<feature type="chain" id="PRO_1000193607" description="Gamma-glutamyl phosphate reductase">
    <location>
        <begin position="1"/>
        <end position="417"/>
    </location>
</feature>
<proteinExistence type="inferred from homology"/>
<gene>
    <name evidence="1" type="primary">proA</name>
    <name type="ordered locus">ECH74115_0288</name>
</gene>
<reference key="1">
    <citation type="journal article" date="2011" name="Proc. Natl. Acad. Sci. U.S.A.">
        <title>Genomic anatomy of Escherichia coli O157:H7 outbreaks.</title>
        <authorList>
            <person name="Eppinger M."/>
            <person name="Mammel M.K."/>
            <person name="Leclerc J.E."/>
            <person name="Ravel J."/>
            <person name="Cebula T.A."/>
        </authorList>
    </citation>
    <scope>NUCLEOTIDE SEQUENCE [LARGE SCALE GENOMIC DNA]</scope>
    <source>
        <strain>EC4115 / EHEC</strain>
    </source>
</reference>
<keyword id="KW-0028">Amino-acid biosynthesis</keyword>
<keyword id="KW-0963">Cytoplasm</keyword>
<keyword id="KW-0521">NADP</keyword>
<keyword id="KW-0560">Oxidoreductase</keyword>
<keyword id="KW-0641">Proline biosynthesis</keyword>
<protein>
    <recommendedName>
        <fullName evidence="1">Gamma-glutamyl phosphate reductase</fullName>
        <shortName evidence="1">GPR</shortName>
        <ecNumber evidence="1">1.2.1.41</ecNumber>
    </recommendedName>
    <alternativeName>
        <fullName evidence="1">Glutamate-5-semialdehyde dehydrogenase</fullName>
    </alternativeName>
    <alternativeName>
        <fullName evidence="1">Glutamyl-gamma-semialdehyde dehydrogenase</fullName>
        <shortName evidence="1">GSA dehydrogenase</shortName>
    </alternativeName>
</protein>
<dbReference type="EC" id="1.2.1.41" evidence="1"/>
<dbReference type="EMBL" id="CP001164">
    <property type="protein sequence ID" value="ACI36651.1"/>
    <property type="molecule type" value="Genomic_DNA"/>
</dbReference>
<dbReference type="RefSeq" id="WP_000893282.1">
    <property type="nucleotide sequence ID" value="NC_011353.1"/>
</dbReference>
<dbReference type="SMR" id="B5Z1I7"/>
<dbReference type="KEGG" id="ecf:ECH74115_0288"/>
<dbReference type="HOGENOM" id="CLU_030231_0_0_6"/>
<dbReference type="UniPathway" id="UPA00098">
    <property type="reaction ID" value="UER00360"/>
</dbReference>
<dbReference type="GO" id="GO:0005737">
    <property type="term" value="C:cytoplasm"/>
    <property type="evidence" value="ECO:0007669"/>
    <property type="project" value="UniProtKB-SubCell"/>
</dbReference>
<dbReference type="GO" id="GO:0004350">
    <property type="term" value="F:glutamate-5-semialdehyde dehydrogenase activity"/>
    <property type="evidence" value="ECO:0007669"/>
    <property type="project" value="UniProtKB-UniRule"/>
</dbReference>
<dbReference type="GO" id="GO:0050661">
    <property type="term" value="F:NADP binding"/>
    <property type="evidence" value="ECO:0007669"/>
    <property type="project" value="InterPro"/>
</dbReference>
<dbReference type="GO" id="GO:0055129">
    <property type="term" value="P:L-proline biosynthetic process"/>
    <property type="evidence" value="ECO:0007669"/>
    <property type="project" value="UniProtKB-UniRule"/>
</dbReference>
<dbReference type="CDD" id="cd07079">
    <property type="entry name" value="ALDH_F18-19_ProA-GPR"/>
    <property type="match status" value="1"/>
</dbReference>
<dbReference type="FunFam" id="3.40.309.10:FF:000006">
    <property type="entry name" value="Gamma-glutamyl phosphate reductase"/>
    <property type="match status" value="1"/>
</dbReference>
<dbReference type="Gene3D" id="3.40.605.10">
    <property type="entry name" value="Aldehyde Dehydrogenase, Chain A, domain 1"/>
    <property type="match status" value="1"/>
</dbReference>
<dbReference type="Gene3D" id="3.40.309.10">
    <property type="entry name" value="Aldehyde Dehydrogenase, Chain A, domain 2"/>
    <property type="match status" value="1"/>
</dbReference>
<dbReference type="HAMAP" id="MF_00412">
    <property type="entry name" value="ProA"/>
    <property type="match status" value="1"/>
</dbReference>
<dbReference type="InterPro" id="IPR016161">
    <property type="entry name" value="Ald_DH/histidinol_DH"/>
</dbReference>
<dbReference type="InterPro" id="IPR016163">
    <property type="entry name" value="Ald_DH_C"/>
</dbReference>
<dbReference type="InterPro" id="IPR016162">
    <property type="entry name" value="Ald_DH_N"/>
</dbReference>
<dbReference type="InterPro" id="IPR015590">
    <property type="entry name" value="Aldehyde_DH_dom"/>
</dbReference>
<dbReference type="InterPro" id="IPR020593">
    <property type="entry name" value="G-glutamylP_reductase_CS"/>
</dbReference>
<dbReference type="InterPro" id="IPR012134">
    <property type="entry name" value="Glu-5-SA_DH"/>
</dbReference>
<dbReference type="InterPro" id="IPR000965">
    <property type="entry name" value="GPR_dom"/>
</dbReference>
<dbReference type="NCBIfam" id="NF001221">
    <property type="entry name" value="PRK00197.1"/>
    <property type="match status" value="1"/>
</dbReference>
<dbReference type="NCBIfam" id="TIGR00407">
    <property type="entry name" value="proA"/>
    <property type="match status" value="1"/>
</dbReference>
<dbReference type="PANTHER" id="PTHR11063:SF8">
    <property type="entry name" value="DELTA-1-PYRROLINE-5-CARBOXYLATE SYNTHASE"/>
    <property type="match status" value="1"/>
</dbReference>
<dbReference type="PANTHER" id="PTHR11063">
    <property type="entry name" value="GLUTAMATE SEMIALDEHYDE DEHYDROGENASE"/>
    <property type="match status" value="1"/>
</dbReference>
<dbReference type="Pfam" id="PF00171">
    <property type="entry name" value="Aldedh"/>
    <property type="match status" value="1"/>
</dbReference>
<dbReference type="PIRSF" id="PIRSF000151">
    <property type="entry name" value="GPR"/>
    <property type="match status" value="1"/>
</dbReference>
<dbReference type="SUPFAM" id="SSF53720">
    <property type="entry name" value="ALDH-like"/>
    <property type="match status" value="1"/>
</dbReference>
<dbReference type="PROSITE" id="PS01223">
    <property type="entry name" value="PROA"/>
    <property type="match status" value="1"/>
</dbReference>
<accession>B5Z1I7</accession>
<evidence type="ECO:0000255" key="1">
    <source>
        <dbReference type="HAMAP-Rule" id="MF_00412"/>
    </source>
</evidence>
<name>PROA_ECO5E</name>